<reference key="1">
    <citation type="journal article" date="1995" name="Proc. Natl. Acad. Sci. U.S.A.">
        <title>Molecular cloning and sequence analysis of expansins - a highly conserved, multigene family of proteins that mediate cell wall extension in plants.</title>
        <authorList>
            <person name="Shcherban T.Y."/>
            <person name="Shi J."/>
            <person name="Durachko D.M."/>
            <person name="Guiltinan M.J."/>
            <person name="McQueen-Mason S.J."/>
            <person name="Shieh M."/>
            <person name="Cosgrove D.J."/>
        </authorList>
    </citation>
    <scope>NUCLEOTIDE SEQUENCE [MRNA]</scope>
</reference>
<reference key="2">
    <citation type="journal article" date="1997" name="Proc. Natl. Acad. Sci. U.S.A.">
        <title>Group I allergens of grass pollen as cell wall-loosening agents.</title>
        <authorList>
            <person name="Cosgrove D.J."/>
            <person name="Bedinger P.A."/>
            <person name="Durachko D.M."/>
        </authorList>
    </citation>
    <scope>NUCLEOTIDE SEQUENCE [MRNA]</scope>
</reference>
<reference key="3">
    <citation type="journal article" date="2003" name="Science">
        <title>In-depth view of structure, activity, and evolution of rice chromosome 10.</title>
        <authorList>
            <person name="Yu Y."/>
            <person name="Rambo T."/>
            <person name="Currie J."/>
            <person name="Saski C."/>
            <person name="Kim H.-R."/>
            <person name="Collura K."/>
            <person name="Thompson S."/>
            <person name="Simmons J."/>
            <person name="Yang T.-J."/>
            <person name="Nah G."/>
            <person name="Patel A.J."/>
            <person name="Thurmond S."/>
            <person name="Henry D."/>
            <person name="Oates R."/>
            <person name="Palmer M."/>
            <person name="Pries G."/>
            <person name="Gibson J."/>
            <person name="Anderson H."/>
            <person name="Paradkar M."/>
            <person name="Crane L."/>
            <person name="Dale J."/>
            <person name="Carver M.B."/>
            <person name="Wood T."/>
            <person name="Frisch D."/>
            <person name="Engler F."/>
            <person name="Soderlund C."/>
            <person name="Palmer L.E."/>
            <person name="Teytelman L."/>
            <person name="Nascimento L."/>
            <person name="De la Bastide M."/>
            <person name="Spiegel L."/>
            <person name="Ware D."/>
            <person name="O'Shaughnessy A."/>
            <person name="Dike S."/>
            <person name="Dedhia N."/>
            <person name="Preston R."/>
            <person name="Huang E."/>
            <person name="Ferraro K."/>
            <person name="Kuit K."/>
            <person name="Miller B."/>
            <person name="Zutavern T."/>
            <person name="Katzenberger F."/>
            <person name="Muller S."/>
            <person name="Balija V."/>
            <person name="Martienssen R.A."/>
            <person name="Stein L."/>
            <person name="Minx P."/>
            <person name="Johnson D."/>
            <person name="Cordum H."/>
            <person name="Mardis E."/>
            <person name="Cheng Z."/>
            <person name="Jiang J."/>
            <person name="Wilson R."/>
            <person name="McCombie W.R."/>
            <person name="Wing R.A."/>
            <person name="Yuan Q."/>
            <person name="Ouyang S."/>
            <person name="Liu J."/>
            <person name="Jones K.M."/>
            <person name="Gansberger K."/>
            <person name="Moffat K."/>
            <person name="Hill J."/>
            <person name="Tsitrin T."/>
            <person name="Overton L."/>
            <person name="Bera J."/>
            <person name="Kim M."/>
            <person name="Jin S."/>
            <person name="Tallon L."/>
            <person name="Ciecko A."/>
            <person name="Pai G."/>
            <person name="Van Aken S."/>
            <person name="Utterback T."/>
            <person name="Reidmuller S."/>
            <person name="Bormann J."/>
            <person name="Feldblyum T."/>
            <person name="Hsiao J."/>
            <person name="Zismann V."/>
            <person name="Blunt S."/>
            <person name="de Vazeille A.R."/>
            <person name="Shaffer T."/>
            <person name="Koo H."/>
            <person name="Suh B."/>
            <person name="Yang Q."/>
            <person name="Haas B."/>
            <person name="Peterson J."/>
            <person name="Pertea M."/>
            <person name="Volfovsky N."/>
            <person name="Wortman J."/>
            <person name="White O."/>
            <person name="Salzberg S.L."/>
            <person name="Fraser C.M."/>
            <person name="Buell C.R."/>
            <person name="Messing J."/>
            <person name="Song R."/>
            <person name="Fuks G."/>
            <person name="Llaca V."/>
            <person name="Kovchak S."/>
            <person name="Young S."/>
            <person name="Bowers J.E."/>
            <person name="Paterson A.H."/>
            <person name="Johns M.A."/>
            <person name="Mao L."/>
            <person name="Pan H."/>
            <person name="Dean R.A."/>
        </authorList>
    </citation>
    <scope>NUCLEOTIDE SEQUENCE [LARGE SCALE GENOMIC DNA]</scope>
    <source>
        <strain>cv. Nipponbare</strain>
    </source>
</reference>
<reference key="4">
    <citation type="journal article" date="2005" name="Nature">
        <title>The map-based sequence of the rice genome.</title>
        <authorList>
            <consortium name="International rice genome sequencing project (IRGSP)"/>
        </authorList>
    </citation>
    <scope>NUCLEOTIDE SEQUENCE [LARGE SCALE GENOMIC DNA]</scope>
    <source>
        <strain>cv. Nipponbare</strain>
    </source>
</reference>
<reference key="5">
    <citation type="journal article" date="2008" name="Nucleic Acids Res.">
        <title>The rice annotation project database (RAP-DB): 2008 update.</title>
        <authorList>
            <consortium name="The rice annotation project (RAP)"/>
        </authorList>
    </citation>
    <scope>GENOME REANNOTATION</scope>
    <source>
        <strain>cv. Nipponbare</strain>
    </source>
</reference>
<reference key="6">
    <citation type="journal article" date="2013" name="Rice">
        <title>Improvement of the Oryza sativa Nipponbare reference genome using next generation sequence and optical map data.</title>
        <authorList>
            <person name="Kawahara Y."/>
            <person name="de la Bastide M."/>
            <person name="Hamilton J.P."/>
            <person name="Kanamori H."/>
            <person name="McCombie W.R."/>
            <person name="Ouyang S."/>
            <person name="Schwartz D.C."/>
            <person name="Tanaka T."/>
            <person name="Wu J."/>
            <person name="Zhou S."/>
            <person name="Childs K.L."/>
            <person name="Davidson R.M."/>
            <person name="Lin H."/>
            <person name="Quesada-Ocampo L."/>
            <person name="Vaillancourt B."/>
            <person name="Sakai H."/>
            <person name="Lee S.S."/>
            <person name="Kim J."/>
            <person name="Numa H."/>
            <person name="Itoh T."/>
            <person name="Buell C.R."/>
            <person name="Matsumoto T."/>
        </authorList>
    </citation>
    <scope>GENOME REANNOTATION</scope>
    <source>
        <strain>cv. Nipponbare</strain>
    </source>
</reference>
<reference key="7">
    <citation type="journal article" date="2005" name="PLoS Biol.">
        <title>The genomes of Oryza sativa: a history of duplications.</title>
        <authorList>
            <person name="Yu J."/>
            <person name="Wang J."/>
            <person name="Lin W."/>
            <person name="Li S."/>
            <person name="Li H."/>
            <person name="Zhou J."/>
            <person name="Ni P."/>
            <person name="Dong W."/>
            <person name="Hu S."/>
            <person name="Zeng C."/>
            <person name="Zhang J."/>
            <person name="Zhang Y."/>
            <person name="Li R."/>
            <person name="Xu Z."/>
            <person name="Li S."/>
            <person name="Li X."/>
            <person name="Zheng H."/>
            <person name="Cong L."/>
            <person name="Lin L."/>
            <person name="Yin J."/>
            <person name="Geng J."/>
            <person name="Li G."/>
            <person name="Shi J."/>
            <person name="Liu J."/>
            <person name="Lv H."/>
            <person name="Li J."/>
            <person name="Wang J."/>
            <person name="Deng Y."/>
            <person name="Ran L."/>
            <person name="Shi X."/>
            <person name="Wang X."/>
            <person name="Wu Q."/>
            <person name="Li C."/>
            <person name="Ren X."/>
            <person name="Wang J."/>
            <person name="Wang X."/>
            <person name="Li D."/>
            <person name="Liu D."/>
            <person name="Zhang X."/>
            <person name="Ji Z."/>
            <person name="Zhao W."/>
            <person name="Sun Y."/>
            <person name="Zhang Z."/>
            <person name="Bao J."/>
            <person name="Han Y."/>
            <person name="Dong L."/>
            <person name="Ji J."/>
            <person name="Chen P."/>
            <person name="Wu S."/>
            <person name="Liu J."/>
            <person name="Xiao Y."/>
            <person name="Bu D."/>
            <person name="Tan J."/>
            <person name="Yang L."/>
            <person name="Ye C."/>
            <person name="Zhang J."/>
            <person name="Xu J."/>
            <person name="Zhou Y."/>
            <person name="Yu Y."/>
            <person name="Zhang B."/>
            <person name="Zhuang S."/>
            <person name="Wei H."/>
            <person name="Liu B."/>
            <person name="Lei M."/>
            <person name="Yu H."/>
            <person name="Li Y."/>
            <person name="Xu H."/>
            <person name="Wei S."/>
            <person name="He X."/>
            <person name="Fang L."/>
            <person name="Zhang Z."/>
            <person name="Zhang Y."/>
            <person name="Huang X."/>
            <person name="Su Z."/>
            <person name="Tong W."/>
            <person name="Li J."/>
            <person name="Tong Z."/>
            <person name="Li S."/>
            <person name="Ye J."/>
            <person name="Wang L."/>
            <person name="Fang L."/>
            <person name="Lei T."/>
            <person name="Chen C.-S."/>
            <person name="Chen H.-C."/>
            <person name="Xu Z."/>
            <person name="Li H."/>
            <person name="Huang H."/>
            <person name="Zhang F."/>
            <person name="Xu H."/>
            <person name="Li N."/>
            <person name="Zhao C."/>
            <person name="Li S."/>
            <person name="Dong L."/>
            <person name="Huang Y."/>
            <person name="Li L."/>
            <person name="Xi Y."/>
            <person name="Qi Q."/>
            <person name="Li W."/>
            <person name="Zhang B."/>
            <person name="Hu W."/>
            <person name="Zhang Y."/>
            <person name="Tian X."/>
            <person name="Jiao Y."/>
            <person name="Liang X."/>
            <person name="Jin J."/>
            <person name="Gao L."/>
            <person name="Zheng W."/>
            <person name="Hao B."/>
            <person name="Liu S.-M."/>
            <person name="Wang W."/>
            <person name="Yuan L."/>
            <person name="Cao M."/>
            <person name="McDermott J."/>
            <person name="Samudrala R."/>
            <person name="Wang J."/>
            <person name="Wong G.K.-S."/>
            <person name="Yang H."/>
        </authorList>
    </citation>
    <scope>NUCLEOTIDE SEQUENCE [LARGE SCALE GENOMIC DNA]</scope>
    <source>
        <strain>cv. Nipponbare</strain>
    </source>
</reference>
<reference key="8">
    <citation type="journal article" date="2003" name="Science">
        <title>Collection, mapping, and annotation of over 28,000 cDNA clones from japonica rice.</title>
        <authorList>
            <consortium name="The rice full-length cDNA consortium"/>
        </authorList>
    </citation>
    <scope>NUCLEOTIDE SEQUENCE [LARGE SCALE MRNA]</scope>
    <source>
        <strain>cv. Nipponbare</strain>
    </source>
</reference>
<reference key="9">
    <citation type="journal article" date="2002" name="Plant Physiol.">
        <title>Expression of alpha-expansin and expansin-like genes in deepwater rice.</title>
        <authorList>
            <person name="Lee Y."/>
            <person name="Kende H."/>
        </authorList>
    </citation>
    <scope>TISSUE SPECIFICITY</scope>
</reference>
<reference key="10">
    <citation type="journal article" date="2004" name="Plant Mol. Biol.">
        <title>Nomenclature for members of the expansin superfamily of genes and proteins.</title>
        <authorList>
            <person name="Kende H."/>
            <person name="Bradford K.J."/>
            <person name="Brummell D.A."/>
            <person name="Cho H.-T."/>
            <person name="Cosgrove D.J."/>
            <person name="Fleming A.J."/>
            <person name="Gehring C."/>
            <person name="Lee Y."/>
            <person name="McQueen-Mason S.J."/>
            <person name="Rose J.K.C."/>
            <person name="Voesenek L.A.C."/>
        </authorList>
    </citation>
    <scope>NOMENCLATURE</scope>
</reference>
<proteinExistence type="evidence at transcript level"/>
<keyword id="KW-0134">Cell wall</keyword>
<keyword id="KW-0961">Cell wall biogenesis/degradation</keyword>
<keyword id="KW-1015">Disulfide bond</keyword>
<keyword id="KW-0472">Membrane</keyword>
<keyword id="KW-1185">Reference proteome</keyword>
<keyword id="KW-0964">Secreted</keyword>
<keyword id="KW-0732">Signal</keyword>
<accession>O24230</accession>
<accession>A3C775</accession>
<accession>Q7XCA6</accession>
<accession>Q9AV20</accession>
<name>EXPB2_ORYSJ</name>
<protein>
    <recommendedName>
        <fullName>Expansin-B2</fullName>
    </recommendedName>
    <alternativeName>
        <fullName>Beta-expansin-2</fullName>
    </alternativeName>
    <alternativeName>
        <fullName>OsEXPB2</fullName>
    </alternativeName>
    <alternativeName>
        <fullName>OsaEXPb1.9</fullName>
    </alternativeName>
</protein>
<sequence>MAGASAKVVAMLLSVLATYGFAAGVVYTNDWLPAKATWYGQPNGAGPDDNGGACGFKNTNQYPFMSMTSCGNEPLFQDGKGCGACYQIRCTNNPSCSGQPRTVIITDMNYYPVARYHFDLSGTAFGAMARPGLNDQLRHAGIIDIQFRRVPCYHRGLYVNFHVEAGSNPVYLAVLVEFANKDGTVVQLDVMESLPSGKPTRVWTPMRRSWGSIWRLDANHRLQGPFSLRMVSESGQTVIAHQVIPANWRANTNYGSKVQFR</sequence>
<evidence type="ECO:0000250" key="1"/>
<evidence type="ECO:0000255" key="2"/>
<evidence type="ECO:0000255" key="3">
    <source>
        <dbReference type="PROSITE-ProRule" id="PRU00078"/>
    </source>
</evidence>
<evidence type="ECO:0000255" key="4">
    <source>
        <dbReference type="PROSITE-ProRule" id="PRU00079"/>
    </source>
</evidence>
<evidence type="ECO:0000269" key="5">
    <source>
    </source>
</evidence>
<evidence type="ECO:0000305" key="6"/>
<evidence type="ECO:0000312" key="7">
    <source>
        <dbReference type="EMBL" id="EAZ16938.1"/>
    </source>
</evidence>
<gene>
    <name type="primary">EXPB2</name>
    <name type="ordered locus">Os10g0555700</name>
    <name type="ordered locus">LOC_Os10g40710</name>
    <name evidence="7" type="ORF">OsJ_32419</name>
    <name type="ORF">OSJNBb0014I11.2</name>
</gene>
<organism>
    <name type="scientific">Oryza sativa subsp. japonica</name>
    <name type="common">Rice</name>
    <dbReference type="NCBI Taxonomy" id="39947"/>
    <lineage>
        <taxon>Eukaryota</taxon>
        <taxon>Viridiplantae</taxon>
        <taxon>Streptophyta</taxon>
        <taxon>Embryophyta</taxon>
        <taxon>Tracheophyta</taxon>
        <taxon>Spermatophyta</taxon>
        <taxon>Magnoliopsida</taxon>
        <taxon>Liliopsida</taxon>
        <taxon>Poales</taxon>
        <taxon>Poaceae</taxon>
        <taxon>BOP clade</taxon>
        <taxon>Oryzoideae</taxon>
        <taxon>Oryzeae</taxon>
        <taxon>Oryzinae</taxon>
        <taxon>Oryza</taxon>
        <taxon>Oryza sativa</taxon>
    </lineage>
</organism>
<comment type="function">
    <text evidence="1">May cause loosening and extension of plant cell walls by disrupting non-covalent bonding between cellulose microfibrils and matrix glucans. No enzymatic activity has been found. May be required for rapid internodal elongation in deepwater rice during submergence (By similarity).</text>
</comment>
<comment type="subcellular location">
    <subcellularLocation>
        <location evidence="1">Secreted</location>
        <location evidence="1">Cell wall</location>
    </subcellularLocation>
    <subcellularLocation>
        <location evidence="1">Membrane</location>
        <topology evidence="1">Peripheral membrane protein</topology>
    </subcellularLocation>
</comment>
<comment type="tissue specificity">
    <text evidence="5">Expressed in roots.</text>
</comment>
<comment type="similarity">
    <text evidence="6">Belongs to the expansin family. Expansin B subfamily.</text>
</comment>
<comment type="online information" name="EXPANSIN homepage">
    <link uri="https://www.dept.psu.edu/biology/groups/expansins/index.htm"/>
</comment>
<dbReference type="EMBL" id="U95968">
    <property type="protein sequence ID" value="AAB61710.1"/>
    <property type="molecule type" value="mRNA"/>
</dbReference>
<dbReference type="EMBL" id="AC037426">
    <property type="protein sequence ID" value="AAK15440.1"/>
    <property type="molecule type" value="Genomic_DNA"/>
</dbReference>
<dbReference type="EMBL" id="DP000086">
    <property type="protein sequence ID" value="AAP54968.1"/>
    <property type="molecule type" value="Genomic_DNA"/>
</dbReference>
<dbReference type="EMBL" id="AP008216">
    <property type="protein sequence ID" value="BAF27187.1"/>
    <property type="molecule type" value="Genomic_DNA"/>
</dbReference>
<dbReference type="EMBL" id="AP014966">
    <property type="protein sequence ID" value="BAT11993.1"/>
    <property type="molecule type" value="Genomic_DNA"/>
</dbReference>
<dbReference type="EMBL" id="CM000147">
    <property type="protein sequence ID" value="EAZ16938.1"/>
    <property type="molecule type" value="Genomic_DNA"/>
</dbReference>
<dbReference type="EMBL" id="AK061068">
    <property type="protein sequence ID" value="BAG87709.1"/>
    <property type="molecule type" value="mRNA"/>
</dbReference>
<dbReference type="EMBL" id="AK104128">
    <property type="protein sequence ID" value="BAG96439.1"/>
    <property type="molecule type" value="mRNA"/>
</dbReference>
<dbReference type="PIR" id="T04301">
    <property type="entry name" value="T04301"/>
</dbReference>
<dbReference type="RefSeq" id="XP_015614021.1">
    <property type="nucleotide sequence ID" value="XM_015758535.1"/>
</dbReference>
<dbReference type="SMR" id="O24230"/>
<dbReference type="FunCoup" id="O24230">
    <property type="interactions" value="10"/>
</dbReference>
<dbReference type="IntAct" id="O24230">
    <property type="interactions" value="1"/>
</dbReference>
<dbReference type="STRING" id="39947.O24230"/>
<dbReference type="PaxDb" id="39947-O24230"/>
<dbReference type="EnsemblPlants" id="Os10t0555700-02">
    <property type="protein sequence ID" value="Os10t0555700-02"/>
    <property type="gene ID" value="Os10g0555700"/>
</dbReference>
<dbReference type="Gramene" id="Os10t0555700-02">
    <property type="protein sequence ID" value="Os10t0555700-02"/>
    <property type="gene ID" value="Os10g0555700"/>
</dbReference>
<dbReference type="KEGG" id="dosa:Os10g0555700"/>
<dbReference type="eggNOG" id="ENOG502QRTE">
    <property type="taxonomic scope" value="Eukaryota"/>
</dbReference>
<dbReference type="HOGENOM" id="CLU_027462_1_0_1"/>
<dbReference type="InParanoid" id="O24230"/>
<dbReference type="OMA" id="VELRGMT"/>
<dbReference type="OrthoDB" id="592704at2759"/>
<dbReference type="Proteomes" id="UP000000763">
    <property type="component" value="Chromosome 10"/>
</dbReference>
<dbReference type="Proteomes" id="UP000007752">
    <property type="component" value="Chromosome 10"/>
</dbReference>
<dbReference type="Proteomes" id="UP000059680">
    <property type="component" value="Chromosome 10"/>
</dbReference>
<dbReference type="GO" id="GO:0005576">
    <property type="term" value="C:extracellular region"/>
    <property type="evidence" value="ECO:0007669"/>
    <property type="project" value="UniProtKB-KW"/>
</dbReference>
<dbReference type="GO" id="GO:0016020">
    <property type="term" value="C:membrane"/>
    <property type="evidence" value="ECO:0007669"/>
    <property type="project" value="UniProtKB-SubCell"/>
</dbReference>
<dbReference type="GO" id="GO:0009828">
    <property type="term" value="P:plant-type cell wall loosening"/>
    <property type="evidence" value="ECO:0000250"/>
    <property type="project" value="UniProtKB"/>
</dbReference>
<dbReference type="GO" id="GO:0019953">
    <property type="term" value="P:sexual reproduction"/>
    <property type="evidence" value="ECO:0007669"/>
    <property type="project" value="InterPro"/>
</dbReference>
<dbReference type="CDD" id="cd22275">
    <property type="entry name" value="DPBB_EXPB_N"/>
    <property type="match status" value="1"/>
</dbReference>
<dbReference type="Gene3D" id="2.60.40.760">
    <property type="entry name" value="Expansin, cellulose-binding-like domain"/>
    <property type="match status" value="1"/>
</dbReference>
<dbReference type="Gene3D" id="2.40.40.10">
    <property type="entry name" value="RlpA-like domain"/>
    <property type="match status" value="1"/>
</dbReference>
<dbReference type="InterPro" id="IPR007118">
    <property type="entry name" value="Expan_Lol_pI"/>
</dbReference>
<dbReference type="InterPro" id="IPR007112">
    <property type="entry name" value="Expansin/allergen_DPBB_dom"/>
</dbReference>
<dbReference type="InterPro" id="IPR007117">
    <property type="entry name" value="Expansin_CBD"/>
</dbReference>
<dbReference type="InterPro" id="IPR036749">
    <property type="entry name" value="Expansin_CBD_sf"/>
</dbReference>
<dbReference type="InterPro" id="IPR005795">
    <property type="entry name" value="LolPI"/>
</dbReference>
<dbReference type="InterPro" id="IPR009009">
    <property type="entry name" value="RlpA-like_DPBB"/>
</dbReference>
<dbReference type="InterPro" id="IPR036908">
    <property type="entry name" value="RlpA-like_sf"/>
</dbReference>
<dbReference type="PANTHER" id="PTHR31692:SF19">
    <property type="entry name" value="EXPANSIN-B2"/>
    <property type="match status" value="1"/>
</dbReference>
<dbReference type="PANTHER" id="PTHR31692">
    <property type="entry name" value="EXPANSIN-B3"/>
    <property type="match status" value="1"/>
</dbReference>
<dbReference type="Pfam" id="PF03330">
    <property type="entry name" value="DPBB_1"/>
    <property type="match status" value="1"/>
</dbReference>
<dbReference type="Pfam" id="PF01357">
    <property type="entry name" value="Expansin_C"/>
    <property type="match status" value="1"/>
</dbReference>
<dbReference type="PRINTS" id="PR01225">
    <property type="entry name" value="EXPANSNFAMLY"/>
</dbReference>
<dbReference type="PRINTS" id="PR00829">
    <property type="entry name" value="LOLP1ALLERGN"/>
</dbReference>
<dbReference type="SMART" id="SM00837">
    <property type="entry name" value="DPBB_1"/>
    <property type="match status" value="1"/>
</dbReference>
<dbReference type="SUPFAM" id="SSF50685">
    <property type="entry name" value="Barwin-like endoglucanases"/>
    <property type="match status" value="1"/>
</dbReference>
<dbReference type="SUPFAM" id="SSF49590">
    <property type="entry name" value="PHL pollen allergen"/>
    <property type="match status" value="1"/>
</dbReference>
<dbReference type="PROSITE" id="PS50843">
    <property type="entry name" value="EXPANSIN_CBD"/>
    <property type="match status" value="1"/>
</dbReference>
<dbReference type="PROSITE" id="PS50842">
    <property type="entry name" value="EXPANSIN_EG45"/>
    <property type="match status" value="1"/>
</dbReference>
<feature type="signal peptide" evidence="2">
    <location>
        <begin position="1"/>
        <end position="24"/>
    </location>
</feature>
<feature type="chain" id="PRO_0000252013" description="Expansin-B2">
    <location>
        <begin position="25"/>
        <end position="261"/>
    </location>
</feature>
<feature type="domain" description="Expansin-like EG45" evidence="4">
    <location>
        <begin position="51"/>
        <end position="157"/>
    </location>
</feature>
<feature type="domain" description="Expansin-like CBD" evidence="3">
    <location>
        <begin position="170"/>
        <end position="256"/>
    </location>
</feature>
<feature type="disulfide bond" evidence="4">
    <location>
        <begin position="54"/>
        <end position="82"/>
    </location>
</feature>
<feature type="disulfide bond" evidence="4">
    <location>
        <begin position="85"/>
        <end position="152"/>
    </location>
</feature>
<feature type="disulfide bond" evidence="4">
    <location>
        <begin position="90"/>
        <end position="96"/>
    </location>
</feature>